<protein>
    <recommendedName>
        <fullName>BTB/POZ domain-containing protein 2</fullName>
    </recommendedName>
</protein>
<feature type="chain" id="PRO_0000186210" description="BTB/POZ domain-containing protein 2">
    <location>
        <begin position="1"/>
        <end position="525"/>
    </location>
</feature>
<feature type="domain" description="BTB" evidence="1">
    <location>
        <begin position="117"/>
        <end position="187"/>
    </location>
</feature>
<feature type="region of interest" description="Disordered" evidence="2">
    <location>
        <begin position="1"/>
        <end position="86"/>
    </location>
</feature>
<feature type="compositionally biased region" description="Gly residues" evidence="2">
    <location>
        <begin position="16"/>
        <end position="26"/>
    </location>
</feature>
<feature type="compositionally biased region" description="Low complexity" evidence="2">
    <location>
        <begin position="27"/>
        <end position="55"/>
    </location>
</feature>
<feature type="compositionally biased region" description="Pro residues" evidence="2">
    <location>
        <begin position="56"/>
        <end position="65"/>
    </location>
</feature>
<feature type="compositionally biased region" description="Low complexity" evidence="2">
    <location>
        <begin position="66"/>
        <end position="86"/>
    </location>
</feature>
<feature type="splice variant" id="VSP_010562" description="In isoform 2." evidence="5 6">
    <location>
        <begin position="1"/>
        <end position="321"/>
    </location>
</feature>
<feature type="sequence conflict" description="In Ref. 6; CAB96527." evidence="7" ref="6">
    <original>R</original>
    <variation>L</variation>
    <location>
        <position position="307"/>
    </location>
</feature>
<feature type="strand" evidence="8">
    <location>
        <begin position="372"/>
        <end position="375"/>
    </location>
</feature>
<feature type="strand" evidence="8">
    <location>
        <begin position="378"/>
        <end position="384"/>
    </location>
</feature>
<feature type="strand" evidence="8">
    <location>
        <begin position="391"/>
        <end position="399"/>
    </location>
</feature>
<feature type="strand" evidence="8">
    <location>
        <begin position="401"/>
        <end position="409"/>
    </location>
</feature>
<feature type="strand" evidence="8">
    <location>
        <begin position="411"/>
        <end position="426"/>
    </location>
</feature>
<feature type="turn" evidence="8">
    <location>
        <begin position="427"/>
        <end position="430"/>
    </location>
</feature>
<feature type="strand" evidence="8">
    <location>
        <begin position="431"/>
        <end position="442"/>
    </location>
</feature>
<feature type="strand" evidence="8">
    <location>
        <begin position="448"/>
        <end position="459"/>
    </location>
</feature>
<feature type="strand" evidence="8">
    <location>
        <begin position="465"/>
        <end position="474"/>
    </location>
</feature>
<feature type="strand" evidence="8">
    <location>
        <begin position="476"/>
        <end position="481"/>
    </location>
</feature>
<feature type="strand" evidence="8">
    <location>
        <begin position="484"/>
        <end position="489"/>
    </location>
</feature>
<feature type="turn" evidence="8">
    <location>
        <begin position="491"/>
        <end position="493"/>
    </location>
</feature>
<feature type="strand" evidence="8">
    <location>
        <begin position="496"/>
        <end position="502"/>
    </location>
</feature>
<feature type="strand" evidence="8">
    <location>
        <begin position="506"/>
        <end position="508"/>
    </location>
</feature>
<feature type="strand" evidence="8">
    <location>
        <begin position="513"/>
        <end position="517"/>
    </location>
</feature>
<feature type="strand" evidence="8">
    <location>
        <begin position="520"/>
        <end position="525"/>
    </location>
</feature>
<comment type="subunit">
    <text evidence="3 4">Interacts with topoisomerase 1 and with TRIM5 isoform Delta.</text>
</comment>
<comment type="interaction">
    <interactant intactId="EBI-710091">
        <id>Q9BX70</id>
    </interactant>
    <interactant intactId="EBI-395261">
        <id>P24863</id>
        <label>CCNC</label>
    </interactant>
    <organismsDiffer>false</organismsDiffer>
    <experiments>3</experiments>
</comment>
<comment type="interaction">
    <interactant intactId="EBI-710091">
        <id>Q9BX70</id>
    </interactant>
    <interactant intactId="EBI-739784">
        <id>Q9BW66</id>
        <label>CINP</label>
    </interactant>
    <organismsDiffer>false</organismsDiffer>
    <experiments>3</experiments>
</comment>
<comment type="interaction">
    <interactant intactId="EBI-710091">
        <id>Q9BX70</id>
    </interactant>
    <interactant intactId="EBI-486838">
        <id>Q7L5N1</id>
        <label>COPS6</label>
    </interactant>
    <organismsDiffer>false</organismsDiffer>
    <experiments>9</experiments>
</comment>
<comment type="interaction">
    <interactant intactId="EBI-710091">
        <id>Q9BX70</id>
    </interactant>
    <interactant intactId="EBI-456129">
        <id>Q13618</id>
        <label>CUL3</label>
    </interactant>
    <organismsDiffer>false</organismsDiffer>
    <experiments>9</experiments>
</comment>
<comment type="interaction">
    <interactant intactId="EBI-710091">
        <id>Q9BX70</id>
    </interactant>
    <interactant intactId="EBI-744248">
        <id>P40692</id>
        <label>MLH1</label>
    </interactant>
    <organismsDiffer>false</organismsDiffer>
    <experiments>3</experiments>
</comment>
<comment type="interaction">
    <interactant intactId="EBI-710091">
        <id>Q9BX70</id>
    </interactant>
    <interactant intactId="EBI-10311409">
        <id>Q9NPG2</id>
        <label>NGB</label>
    </interactant>
    <organismsDiffer>false</organismsDiffer>
    <experiments>3</experiments>
</comment>
<comment type="interaction">
    <interactant intactId="EBI-710091">
        <id>Q9BX70</id>
    </interactant>
    <interactant intactId="EBI-741158">
        <id>Q96HA8</id>
        <label>NTAQ1</label>
    </interactant>
    <organismsDiffer>false</organismsDiffer>
    <experiments>3</experiments>
</comment>
<comment type="interaction">
    <interactant intactId="EBI-710091">
        <id>Q9BX70</id>
    </interactant>
    <interactant intactId="EBI-9057006">
        <id>Q9UJX0</id>
        <label>OSGIN1</label>
    </interactant>
    <organismsDiffer>false</organismsDiffer>
    <experiments>3</experiments>
</comment>
<comment type="interaction">
    <interactant intactId="EBI-710091">
        <id>Q9BX70</id>
    </interactant>
    <interactant intactId="EBI-752143">
        <id>Q16401</id>
        <label>PSMD5</label>
    </interactant>
    <organismsDiffer>false</organismsDiffer>
    <experiments>3</experiments>
</comment>
<comment type="interaction">
    <interactant intactId="EBI-710091">
        <id>Q9BX70</id>
    </interactant>
    <interactant intactId="EBI-366083">
        <id>P04637</id>
        <label>TP53</label>
    </interactant>
    <organismsDiffer>false</organismsDiffer>
    <experiments>2</experiments>
</comment>
<comment type="subcellular location">
    <subcellularLocation>
        <location evidence="4">Cytoplasm</location>
    </subcellularLocation>
    <text evidence="4">Localizes to punctate or elongated cytoplasmic bodies.</text>
</comment>
<comment type="alternative products">
    <event type="alternative splicing"/>
    <isoform>
        <id>Q9BX70-1</id>
        <name>1</name>
        <sequence type="displayed"/>
    </isoform>
    <isoform>
        <id>Q9BX70-2</id>
        <name>2</name>
        <sequence type="described" ref="VSP_010562"/>
    </isoform>
</comment>
<comment type="sequence caution" evidence="7">
    <conflict type="erroneous gene model prediction">
        <sequence resource="EMBL-CDS" id="AAC16070"/>
    </conflict>
</comment>
<comment type="sequence caution" evidence="7">
    <conflict type="erroneous initiation">
        <sequence resource="EMBL-CDS" id="BAB55143"/>
    </conflict>
</comment>
<accession>Q9BX70</accession>
<accession>O60418</accession>
<accession>O75248</accession>
<accession>Q4VBZ1</accession>
<accession>Q6IAC5</accession>
<accession>Q7Z5W0</accession>
<accession>Q96SX8</accession>
<accession>Q9NPS1</accession>
<accession>Q9NX81</accession>
<sequence length="525" mass="55931">MAAGGSGGRASCPPGVGVGPGTGGSPGPSANAAATPAPGNAAAAAAAAAAAAAAPGPTPPAPPGPGTDAQAAGAERAEEAAGPGAAALQREAAYNWQASKPTVQERFAFLFNNEVLCDVHFLVGKGLSSQRIPAHRFVLAVGSAVFDAMFNGGMATTSTEIELPDVEPAAFLALLKFLYSDEVQIGPETVMTTLYTAKKYAVPALEAHCVEFLKKNLRADNAFMLLTQARLFDEPQLASLCLENIDKNTADAITAEGFTDIDLDTLVAVLERDTLGIREVRLFNAVVRWSEAECQRQQLQVTPENRRKVLGKALGLIRFPLMTIEEFAAGPAQSGILVDREVVSLFLHFTVNPKPRVEFIDRPRCCLRGKECSINRFQQVESRWGYSGTSDRIRFSVNKRIFVVGFGLYGSIHGPTDYQVNIQIIHTDSNTVLGQNDTGFSCDGSASTFRVMFKEPVEVLPNVNYTACATLKGPDSHYGTKGLRKVTHESPTTGAKTCFTFCYAAGNNNGTSVEDGQIPEVIFYT</sequence>
<keyword id="KW-0002">3D-structure</keyword>
<keyword id="KW-0025">Alternative splicing</keyword>
<keyword id="KW-0963">Cytoplasm</keyword>
<keyword id="KW-1267">Proteomics identification</keyword>
<keyword id="KW-1185">Reference proteome</keyword>
<gene>
    <name type="primary">BTBD2</name>
</gene>
<dbReference type="EMBL" id="AF355797">
    <property type="protein sequence ID" value="AAK25826.1"/>
    <property type="molecule type" value="mRNA"/>
</dbReference>
<dbReference type="EMBL" id="AK000393">
    <property type="protein sequence ID" value="BAA91136.1"/>
    <property type="molecule type" value="mRNA"/>
</dbReference>
<dbReference type="EMBL" id="AK027481">
    <property type="protein sequence ID" value="BAB55143.1"/>
    <property type="status" value="ALT_INIT"/>
    <property type="molecule type" value="mRNA"/>
</dbReference>
<dbReference type="EMBL" id="CR457230">
    <property type="protein sequence ID" value="CAG33511.1"/>
    <property type="molecule type" value="mRNA"/>
</dbReference>
<dbReference type="EMBL" id="AC004678">
    <property type="protein sequence ID" value="AAC16070.1"/>
    <property type="status" value="ALT_SEQ"/>
    <property type="molecule type" value="Genomic_DNA"/>
</dbReference>
<dbReference type="EMBL" id="AC005306">
    <property type="protein sequence ID" value="AAC26984.1"/>
    <property type="molecule type" value="Genomic_DNA"/>
</dbReference>
<dbReference type="EMBL" id="AC005306">
    <property type="protein sequence ID" value="AAG45443.1"/>
    <property type="molecule type" value="Genomic_DNA"/>
</dbReference>
<dbReference type="EMBL" id="BC000564">
    <property type="protein sequence ID" value="AAH00564.2"/>
    <property type="molecule type" value="mRNA"/>
</dbReference>
<dbReference type="EMBL" id="BC008035">
    <property type="protein sequence ID" value="AAH08035.2"/>
    <property type="molecule type" value="mRNA"/>
</dbReference>
<dbReference type="EMBL" id="BC053986">
    <property type="protein sequence ID" value="AAH53986.1"/>
    <property type="molecule type" value="mRNA"/>
</dbReference>
<dbReference type="EMBL" id="BC094820">
    <property type="protein sequence ID" value="AAH94820.1"/>
    <property type="molecule type" value="mRNA"/>
</dbReference>
<dbReference type="EMBL" id="AL360275">
    <property type="protein sequence ID" value="CAB96527.1"/>
    <property type="molecule type" value="mRNA"/>
</dbReference>
<dbReference type="CCDS" id="CCDS12078.1">
    <molecule id="Q9BX70-1"/>
</dbReference>
<dbReference type="RefSeq" id="NP_060267.2">
    <molecule id="Q9BX70-1"/>
    <property type="nucleotide sequence ID" value="NM_017797.3"/>
</dbReference>
<dbReference type="RefSeq" id="XP_011526429.1">
    <property type="nucleotide sequence ID" value="XM_011528127.1"/>
</dbReference>
<dbReference type="PDB" id="3NO8">
    <property type="method" value="X-ray"/>
    <property type="resolution" value="2.20 A"/>
    <property type="chains" value="A/B=361-525"/>
</dbReference>
<dbReference type="PDBsum" id="3NO8"/>
<dbReference type="SMR" id="Q9BX70"/>
<dbReference type="BioGRID" id="120778">
    <property type="interactions" value="93"/>
</dbReference>
<dbReference type="FunCoup" id="Q9BX70">
    <property type="interactions" value="360"/>
</dbReference>
<dbReference type="IntAct" id="Q9BX70">
    <property type="interactions" value="65"/>
</dbReference>
<dbReference type="MINT" id="Q9BX70"/>
<dbReference type="STRING" id="9606.ENSP00000255608"/>
<dbReference type="GlyGen" id="Q9BX70">
    <property type="glycosylation" value="2 sites"/>
</dbReference>
<dbReference type="iPTMnet" id="Q9BX70"/>
<dbReference type="PhosphoSitePlus" id="Q9BX70"/>
<dbReference type="BioMuta" id="BTBD2"/>
<dbReference type="DMDM" id="20137455"/>
<dbReference type="jPOST" id="Q9BX70"/>
<dbReference type="MassIVE" id="Q9BX70"/>
<dbReference type="PaxDb" id="9606-ENSP00000255608"/>
<dbReference type="PeptideAtlas" id="Q9BX70"/>
<dbReference type="ProteomicsDB" id="79370">
    <molecule id="Q9BX70-1"/>
</dbReference>
<dbReference type="ProteomicsDB" id="79371">
    <molecule id="Q9BX70-2"/>
</dbReference>
<dbReference type="Pumba" id="Q9BX70"/>
<dbReference type="Antibodypedia" id="22876">
    <property type="antibodies" value="61 antibodies from 13 providers"/>
</dbReference>
<dbReference type="DNASU" id="55643"/>
<dbReference type="Ensembl" id="ENST00000255608.9">
    <molecule id="Q9BX70-1"/>
    <property type="protein sequence ID" value="ENSP00000255608.3"/>
    <property type="gene ID" value="ENSG00000133243.10"/>
</dbReference>
<dbReference type="GeneID" id="55643"/>
<dbReference type="KEGG" id="hsa:55643"/>
<dbReference type="MANE-Select" id="ENST00000255608.9">
    <property type="protein sequence ID" value="ENSP00000255608.3"/>
    <property type="RefSeq nucleotide sequence ID" value="NM_017797.4"/>
    <property type="RefSeq protein sequence ID" value="NP_060267.2"/>
</dbReference>
<dbReference type="UCSC" id="uc002lup.2">
    <molecule id="Q9BX70-1"/>
    <property type="organism name" value="human"/>
</dbReference>
<dbReference type="AGR" id="HGNC:15504"/>
<dbReference type="CTD" id="55643"/>
<dbReference type="DisGeNET" id="55643"/>
<dbReference type="GeneCards" id="BTBD2"/>
<dbReference type="HGNC" id="HGNC:15504">
    <property type="gene designation" value="BTBD2"/>
</dbReference>
<dbReference type="HPA" id="ENSG00000133243">
    <property type="expression patterns" value="Tissue enhanced (brain)"/>
</dbReference>
<dbReference type="MIM" id="608531">
    <property type="type" value="gene"/>
</dbReference>
<dbReference type="neXtProt" id="NX_Q9BX70"/>
<dbReference type="OpenTargets" id="ENSG00000133243"/>
<dbReference type="PharmGKB" id="PA25439"/>
<dbReference type="VEuPathDB" id="HostDB:ENSG00000133243"/>
<dbReference type="eggNOG" id="KOG2075">
    <property type="taxonomic scope" value="Eukaryota"/>
</dbReference>
<dbReference type="GeneTree" id="ENSGT00940000159179"/>
<dbReference type="HOGENOM" id="CLU_015899_2_1_1"/>
<dbReference type="InParanoid" id="Q9BX70"/>
<dbReference type="OMA" id="CCPALCI"/>
<dbReference type="OrthoDB" id="636773at2759"/>
<dbReference type="PAN-GO" id="Q9BX70">
    <property type="GO annotations" value="3 GO annotations based on evolutionary models"/>
</dbReference>
<dbReference type="PhylomeDB" id="Q9BX70"/>
<dbReference type="TreeFam" id="TF106482"/>
<dbReference type="PathwayCommons" id="Q9BX70"/>
<dbReference type="SignaLink" id="Q9BX70"/>
<dbReference type="BioGRID-ORCS" id="55643">
    <property type="hits" value="19 hits in 1192 CRISPR screens"/>
</dbReference>
<dbReference type="ChiTaRS" id="BTBD2">
    <property type="organism name" value="human"/>
</dbReference>
<dbReference type="EvolutionaryTrace" id="Q9BX70"/>
<dbReference type="GeneWiki" id="BTBD2"/>
<dbReference type="GenomeRNAi" id="55643"/>
<dbReference type="Pharos" id="Q9BX70">
    <property type="development level" value="Tbio"/>
</dbReference>
<dbReference type="PRO" id="PR:Q9BX70"/>
<dbReference type="Proteomes" id="UP000005640">
    <property type="component" value="Chromosome 19"/>
</dbReference>
<dbReference type="RNAct" id="Q9BX70">
    <property type="molecule type" value="protein"/>
</dbReference>
<dbReference type="Bgee" id="ENSG00000133243">
    <property type="expression patterns" value="Expressed in right frontal lobe and 149 other cell types or tissues"/>
</dbReference>
<dbReference type="ExpressionAtlas" id="Q9BX70">
    <property type="expression patterns" value="baseline and differential"/>
</dbReference>
<dbReference type="GO" id="GO:0005829">
    <property type="term" value="C:cytosol"/>
    <property type="evidence" value="ECO:0000318"/>
    <property type="project" value="GO_Central"/>
</dbReference>
<dbReference type="GO" id="GO:0000932">
    <property type="term" value="C:P-body"/>
    <property type="evidence" value="ECO:0000314"/>
    <property type="project" value="UniProtKB"/>
</dbReference>
<dbReference type="GO" id="GO:0022008">
    <property type="term" value="P:neurogenesis"/>
    <property type="evidence" value="ECO:0000318"/>
    <property type="project" value="GO_Central"/>
</dbReference>
<dbReference type="CDD" id="cd18523">
    <property type="entry name" value="BACK_BTBD2"/>
    <property type="match status" value="1"/>
</dbReference>
<dbReference type="CDD" id="cd18281">
    <property type="entry name" value="BTB_POZ_BTBD1_2"/>
    <property type="match status" value="1"/>
</dbReference>
<dbReference type="FunFam" id="3.30.710.10:FF:000037">
    <property type="entry name" value="BTB (POZ) domain containing 1"/>
    <property type="match status" value="1"/>
</dbReference>
<dbReference type="FunFam" id="1.25.40.420:FF:000004">
    <property type="entry name" value="BTB/POZ domain-containing protein 2"/>
    <property type="match status" value="1"/>
</dbReference>
<dbReference type="FunFam" id="2.60.120.820:FF:000004">
    <property type="entry name" value="BTB/POZ domain-containing protein 2"/>
    <property type="match status" value="1"/>
</dbReference>
<dbReference type="Gene3D" id="1.25.40.420">
    <property type="match status" value="1"/>
</dbReference>
<dbReference type="Gene3D" id="2.60.120.820">
    <property type="entry name" value="PHR domain"/>
    <property type="match status" value="1"/>
</dbReference>
<dbReference type="Gene3D" id="3.30.710.10">
    <property type="entry name" value="Potassium Channel Kv1.1, Chain A"/>
    <property type="match status" value="1"/>
</dbReference>
<dbReference type="InterPro" id="IPR011705">
    <property type="entry name" value="BACK"/>
</dbReference>
<dbReference type="InterPro" id="IPR000210">
    <property type="entry name" value="BTB/POZ_dom"/>
</dbReference>
<dbReference type="InterPro" id="IPR012983">
    <property type="entry name" value="PHR"/>
</dbReference>
<dbReference type="InterPro" id="IPR038648">
    <property type="entry name" value="PHR_sf"/>
</dbReference>
<dbReference type="InterPro" id="IPR011333">
    <property type="entry name" value="SKP1/BTB/POZ_sf"/>
</dbReference>
<dbReference type="PANTHER" id="PTHR45774">
    <property type="entry name" value="BTB/POZ DOMAIN-CONTAINING"/>
    <property type="match status" value="1"/>
</dbReference>
<dbReference type="PANTHER" id="PTHR45774:SF6">
    <property type="entry name" value="BTB_POZ DOMAIN-CONTAINING PROTEIN 2"/>
    <property type="match status" value="1"/>
</dbReference>
<dbReference type="Pfam" id="PF07707">
    <property type="entry name" value="BACK"/>
    <property type="match status" value="1"/>
</dbReference>
<dbReference type="Pfam" id="PF00651">
    <property type="entry name" value="BTB"/>
    <property type="match status" value="1"/>
</dbReference>
<dbReference type="Pfam" id="PF08005">
    <property type="entry name" value="PHR"/>
    <property type="match status" value="1"/>
</dbReference>
<dbReference type="SMART" id="SM00875">
    <property type="entry name" value="BACK"/>
    <property type="match status" value="1"/>
</dbReference>
<dbReference type="SMART" id="SM00225">
    <property type="entry name" value="BTB"/>
    <property type="match status" value="1"/>
</dbReference>
<dbReference type="SUPFAM" id="SSF54695">
    <property type="entry name" value="POZ domain"/>
    <property type="match status" value="1"/>
</dbReference>
<dbReference type="PROSITE" id="PS50097">
    <property type="entry name" value="BTB"/>
    <property type="match status" value="1"/>
</dbReference>
<organism>
    <name type="scientific">Homo sapiens</name>
    <name type="common">Human</name>
    <dbReference type="NCBI Taxonomy" id="9606"/>
    <lineage>
        <taxon>Eukaryota</taxon>
        <taxon>Metazoa</taxon>
        <taxon>Chordata</taxon>
        <taxon>Craniata</taxon>
        <taxon>Vertebrata</taxon>
        <taxon>Euteleostomi</taxon>
        <taxon>Mammalia</taxon>
        <taxon>Eutheria</taxon>
        <taxon>Euarchontoglires</taxon>
        <taxon>Primates</taxon>
        <taxon>Haplorrhini</taxon>
        <taxon>Catarrhini</taxon>
        <taxon>Hominidae</taxon>
        <taxon>Homo</taxon>
    </lineage>
</organism>
<evidence type="ECO:0000255" key="1">
    <source>
        <dbReference type="PROSITE-ProRule" id="PRU00037"/>
    </source>
</evidence>
<evidence type="ECO:0000256" key="2">
    <source>
        <dbReference type="SAM" id="MobiDB-lite"/>
    </source>
</evidence>
<evidence type="ECO:0000269" key="3">
    <source>
    </source>
</evidence>
<evidence type="ECO:0000269" key="4">
    <source>
    </source>
</evidence>
<evidence type="ECO:0000303" key="5">
    <source>
    </source>
</evidence>
<evidence type="ECO:0000303" key="6">
    <source ref="3"/>
</evidence>
<evidence type="ECO:0000305" key="7"/>
<evidence type="ECO:0007829" key="8">
    <source>
        <dbReference type="PDB" id="3NO8"/>
    </source>
</evidence>
<proteinExistence type="evidence at protein level"/>
<name>BTBD2_HUMAN</name>
<reference key="1">
    <citation type="journal article" date="2002" name="BMC Genomics">
        <title>Characterization of BTBD1 and BTBD2, two similar BTB-domain-containing Kelch-like proteins that interact with topoisomerase I.</title>
        <authorList>
            <person name="Xu L."/>
            <person name="Yang L."/>
            <person name="Hashimoto K."/>
            <person name="Anderson M."/>
            <person name="Kohlhagen G."/>
            <person name="Pommier Y."/>
            <person name="D'Arpa P."/>
        </authorList>
    </citation>
    <scope>NUCLEOTIDE SEQUENCE [MRNA] (ISOFORM 1)</scope>
    <scope>INTERACTION WITH TOP1</scope>
    <scope>TISSUE SPECIFICITY</scope>
</reference>
<reference key="2">
    <citation type="journal article" date="2004" name="Nat. Genet.">
        <title>Complete sequencing and characterization of 21,243 full-length human cDNAs.</title>
        <authorList>
            <person name="Ota T."/>
            <person name="Suzuki Y."/>
            <person name="Nishikawa T."/>
            <person name="Otsuki T."/>
            <person name="Sugiyama T."/>
            <person name="Irie R."/>
            <person name="Wakamatsu A."/>
            <person name="Hayashi K."/>
            <person name="Sato H."/>
            <person name="Nagai K."/>
            <person name="Kimura K."/>
            <person name="Makita H."/>
            <person name="Sekine M."/>
            <person name="Obayashi M."/>
            <person name="Nishi T."/>
            <person name="Shibahara T."/>
            <person name="Tanaka T."/>
            <person name="Ishii S."/>
            <person name="Yamamoto J."/>
            <person name="Saito K."/>
            <person name="Kawai Y."/>
            <person name="Isono Y."/>
            <person name="Nakamura Y."/>
            <person name="Nagahari K."/>
            <person name="Murakami K."/>
            <person name="Yasuda T."/>
            <person name="Iwayanagi T."/>
            <person name="Wagatsuma M."/>
            <person name="Shiratori A."/>
            <person name="Sudo H."/>
            <person name="Hosoiri T."/>
            <person name="Kaku Y."/>
            <person name="Kodaira H."/>
            <person name="Kondo H."/>
            <person name="Sugawara M."/>
            <person name="Takahashi M."/>
            <person name="Kanda K."/>
            <person name="Yokoi T."/>
            <person name="Furuya T."/>
            <person name="Kikkawa E."/>
            <person name="Omura Y."/>
            <person name="Abe K."/>
            <person name="Kamihara K."/>
            <person name="Katsuta N."/>
            <person name="Sato K."/>
            <person name="Tanikawa M."/>
            <person name="Yamazaki M."/>
            <person name="Ninomiya K."/>
            <person name="Ishibashi T."/>
            <person name="Yamashita H."/>
            <person name="Murakawa K."/>
            <person name="Fujimori K."/>
            <person name="Tanai H."/>
            <person name="Kimata M."/>
            <person name="Watanabe M."/>
            <person name="Hiraoka S."/>
            <person name="Chiba Y."/>
            <person name="Ishida S."/>
            <person name="Ono Y."/>
            <person name="Takiguchi S."/>
            <person name="Watanabe S."/>
            <person name="Yosida M."/>
            <person name="Hotuta T."/>
            <person name="Kusano J."/>
            <person name="Kanehori K."/>
            <person name="Takahashi-Fujii A."/>
            <person name="Hara H."/>
            <person name="Tanase T.-O."/>
            <person name="Nomura Y."/>
            <person name="Togiya S."/>
            <person name="Komai F."/>
            <person name="Hara R."/>
            <person name="Takeuchi K."/>
            <person name="Arita M."/>
            <person name="Imose N."/>
            <person name="Musashino K."/>
            <person name="Yuuki H."/>
            <person name="Oshima A."/>
            <person name="Sasaki N."/>
            <person name="Aotsuka S."/>
            <person name="Yoshikawa Y."/>
            <person name="Matsunawa H."/>
            <person name="Ichihara T."/>
            <person name="Shiohata N."/>
            <person name="Sano S."/>
            <person name="Moriya S."/>
            <person name="Momiyama H."/>
            <person name="Satoh N."/>
            <person name="Takami S."/>
            <person name="Terashima Y."/>
            <person name="Suzuki O."/>
            <person name="Nakagawa S."/>
            <person name="Senoh A."/>
            <person name="Mizoguchi H."/>
            <person name="Goto Y."/>
            <person name="Shimizu F."/>
            <person name="Wakebe H."/>
            <person name="Hishigaki H."/>
            <person name="Watanabe T."/>
            <person name="Sugiyama A."/>
            <person name="Takemoto M."/>
            <person name="Kawakami B."/>
            <person name="Yamazaki M."/>
            <person name="Watanabe K."/>
            <person name="Kumagai A."/>
            <person name="Itakura S."/>
            <person name="Fukuzumi Y."/>
            <person name="Fujimori Y."/>
            <person name="Komiyama M."/>
            <person name="Tashiro H."/>
            <person name="Tanigami A."/>
            <person name="Fujiwara T."/>
            <person name="Ono T."/>
            <person name="Yamada K."/>
            <person name="Fujii Y."/>
            <person name="Ozaki K."/>
            <person name="Hirao M."/>
            <person name="Ohmori Y."/>
            <person name="Kawabata A."/>
            <person name="Hikiji T."/>
            <person name="Kobatake N."/>
            <person name="Inagaki H."/>
            <person name="Ikema Y."/>
            <person name="Okamoto S."/>
            <person name="Okitani R."/>
            <person name="Kawakami T."/>
            <person name="Noguchi S."/>
            <person name="Itoh T."/>
            <person name="Shigeta K."/>
            <person name="Senba T."/>
            <person name="Matsumura K."/>
            <person name="Nakajima Y."/>
            <person name="Mizuno T."/>
            <person name="Morinaga M."/>
            <person name="Sasaki M."/>
            <person name="Togashi T."/>
            <person name="Oyama M."/>
            <person name="Hata H."/>
            <person name="Watanabe M."/>
            <person name="Komatsu T."/>
            <person name="Mizushima-Sugano J."/>
            <person name="Satoh T."/>
            <person name="Shirai Y."/>
            <person name="Takahashi Y."/>
            <person name="Nakagawa K."/>
            <person name="Okumura K."/>
            <person name="Nagase T."/>
            <person name="Nomura N."/>
            <person name="Kikuchi H."/>
            <person name="Masuho Y."/>
            <person name="Yamashita R."/>
            <person name="Nakai K."/>
            <person name="Yada T."/>
            <person name="Nakamura Y."/>
            <person name="Ohara O."/>
            <person name="Isogai T."/>
            <person name="Sugano S."/>
        </authorList>
    </citation>
    <scope>NUCLEOTIDE SEQUENCE [LARGE SCALE MRNA] (ISOFORM 2)</scope>
    <scope>NUCLEOTIDE SEQUENCE [LARGE SCALE MRNA] OF 214-525 (ISOFORM 1)</scope>
    <source>
        <tissue>Teratocarcinoma</tissue>
    </source>
</reference>
<reference key="3">
    <citation type="submission" date="2004-06" db="EMBL/GenBank/DDBJ databases">
        <title>Cloning of human full open reading frames in Gateway(TM) system entry vector (pDONR201).</title>
        <authorList>
            <person name="Ebert L."/>
            <person name="Schick M."/>
            <person name="Neubert P."/>
            <person name="Schatten R."/>
            <person name="Henze S."/>
            <person name="Korn B."/>
        </authorList>
    </citation>
    <scope>NUCLEOTIDE SEQUENCE [LARGE SCALE MRNA] (ISOFORM 2)</scope>
</reference>
<reference key="4">
    <citation type="journal article" date="2004" name="Nature">
        <title>The DNA sequence and biology of human chromosome 19.</title>
        <authorList>
            <person name="Grimwood J."/>
            <person name="Gordon L.A."/>
            <person name="Olsen A.S."/>
            <person name="Terry A."/>
            <person name="Schmutz J."/>
            <person name="Lamerdin J.E."/>
            <person name="Hellsten U."/>
            <person name="Goodstein D."/>
            <person name="Couronne O."/>
            <person name="Tran-Gyamfi M."/>
            <person name="Aerts A."/>
            <person name="Altherr M."/>
            <person name="Ashworth L."/>
            <person name="Bajorek E."/>
            <person name="Black S."/>
            <person name="Branscomb E."/>
            <person name="Caenepeel S."/>
            <person name="Carrano A.V."/>
            <person name="Caoile C."/>
            <person name="Chan Y.M."/>
            <person name="Christensen M."/>
            <person name="Cleland C.A."/>
            <person name="Copeland A."/>
            <person name="Dalin E."/>
            <person name="Dehal P."/>
            <person name="Denys M."/>
            <person name="Detter J.C."/>
            <person name="Escobar J."/>
            <person name="Flowers D."/>
            <person name="Fotopulos D."/>
            <person name="Garcia C."/>
            <person name="Georgescu A.M."/>
            <person name="Glavina T."/>
            <person name="Gomez M."/>
            <person name="Gonzales E."/>
            <person name="Groza M."/>
            <person name="Hammon N."/>
            <person name="Hawkins T."/>
            <person name="Haydu L."/>
            <person name="Ho I."/>
            <person name="Huang W."/>
            <person name="Israni S."/>
            <person name="Jett J."/>
            <person name="Kadner K."/>
            <person name="Kimball H."/>
            <person name="Kobayashi A."/>
            <person name="Larionov V."/>
            <person name="Leem S.-H."/>
            <person name="Lopez F."/>
            <person name="Lou Y."/>
            <person name="Lowry S."/>
            <person name="Malfatti S."/>
            <person name="Martinez D."/>
            <person name="McCready P.M."/>
            <person name="Medina C."/>
            <person name="Morgan J."/>
            <person name="Nelson K."/>
            <person name="Nolan M."/>
            <person name="Ovcharenko I."/>
            <person name="Pitluck S."/>
            <person name="Pollard M."/>
            <person name="Popkie A.P."/>
            <person name="Predki P."/>
            <person name="Quan G."/>
            <person name="Ramirez L."/>
            <person name="Rash S."/>
            <person name="Retterer J."/>
            <person name="Rodriguez A."/>
            <person name="Rogers S."/>
            <person name="Salamov A."/>
            <person name="Salazar A."/>
            <person name="She X."/>
            <person name="Smith D."/>
            <person name="Slezak T."/>
            <person name="Solovyev V."/>
            <person name="Thayer N."/>
            <person name="Tice H."/>
            <person name="Tsai M."/>
            <person name="Ustaszewska A."/>
            <person name="Vo N."/>
            <person name="Wagner M."/>
            <person name="Wheeler J."/>
            <person name="Wu K."/>
            <person name="Xie G."/>
            <person name="Yang J."/>
            <person name="Dubchak I."/>
            <person name="Furey T.S."/>
            <person name="DeJong P."/>
            <person name="Dickson M."/>
            <person name="Gordon D."/>
            <person name="Eichler E.E."/>
            <person name="Pennacchio L.A."/>
            <person name="Richardson P."/>
            <person name="Stubbs L."/>
            <person name="Rokhsar D.S."/>
            <person name="Myers R.M."/>
            <person name="Rubin E.M."/>
            <person name="Lucas S.M."/>
        </authorList>
    </citation>
    <scope>NUCLEOTIDE SEQUENCE [LARGE SCALE GENOMIC DNA]</scope>
</reference>
<reference key="5">
    <citation type="journal article" date="2004" name="Genome Res.">
        <title>The status, quality, and expansion of the NIH full-length cDNA project: the Mammalian Gene Collection (MGC).</title>
        <authorList>
            <consortium name="The MGC Project Team"/>
        </authorList>
    </citation>
    <scope>NUCLEOTIDE SEQUENCE [LARGE SCALE MRNA] OF 90-525 (ISOFORM 1)</scope>
    <source>
        <tissue>Blood</tissue>
        <tissue>Brain</tissue>
        <tissue>Colon</tissue>
        <tissue>Ovary</tissue>
    </source>
</reference>
<reference key="6">
    <citation type="submission" date="2000-07" db="EMBL/GenBank/DDBJ databases">
        <authorList>
            <consortium name="The European IMAGE consortium"/>
        </authorList>
    </citation>
    <scope>NUCLEOTIDE SEQUENCE [LARGE SCALE MRNA] OF 258-525 (ISOFORM 1)</scope>
</reference>
<reference key="7">
    <citation type="journal article" date="2003" name="Exp. Cell Res.">
        <title>BTBD1 and BTBD2 colocalize to cytoplasmic bodies with the RBCC/tripartite motif protein, TRIM5delta.</title>
        <authorList>
            <person name="Xu L."/>
            <person name="Yang L."/>
            <person name="Moitra P.K."/>
            <person name="Hashimoto K."/>
            <person name="Rallabhandi P."/>
            <person name="Kaul S."/>
            <person name="Meroni G."/>
            <person name="Jensen J.P."/>
            <person name="Weissman A.M."/>
            <person name="D'Arpa P."/>
        </authorList>
    </citation>
    <scope>SUBCELLULAR LOCATION</scope>
    <scope>INTERACTION WITH TRIM5</scope>
</reference>
<reference key="8">
    <citation type="submission" date="2010-08" db="PDB data bank">
        <title>Crystal structure of the PHR domain from human BTBD2 protein.</title>
        <authorList>
            <consortium name="New York structural genomix research consortium (NYSGXRC)"/>
        </authorList>
    </citation>
    <scope>X-RAY CRYSTALLOGRAPHY (2.2 ANGSTROMS) OF 361-525</scope>
</reference>